<reference key="1">
    <citation type="journal article" date="2004" name="Nat. Genet.">
        <title>Evidence in the Legionella pneumophila genome for exploitation of host cell functions and high genome plasticity.</title>
        <authorList>
            <person name="Cazalet C."/>
            <person name="Rusniok C."/>
            <person name="Brueggemann H."/>
            <person name="Zidane N."/>
            <person name="Magnier A."/>
            <person name="Ma L."/>
            <person name="Tichit M."/>
            <person name="Jarraud S."/>
            <person name="Bouchier C."/>
            <person name="Vandenesch F."/>
            <person name="Kunst F."/>
            <person name="Etienne J."/>
            <person name="Glaser P."/>
            <person name="Buchrieser C."/>
        </authorList>
    </citation>
    <scope>NUCLEOTIDE SEQUENCE [LARGE SCALE GENOMIC DNA]</scope>
    <source>
        <strain>Paris</strain>
    </source>
</reference>
<accession>Q5X5Y0</accession>
<sequence length="624" mass="69942">MKKNRFTYGLALGALGIVFGDIGTSPLYALKVTLSGIPINQFNILGVLSLIFWSLIIVVSFKYLMIIFRADNDGEGGILALLALMKHKSTKYQPVFYIVAIFGAGLLLGDGMLTPAISVVSAVEGLGTLSDKLYPYVLPIASLILVLLFSLQAKGTARIGYLFGPLILIWFITIAILGILQILEHPVVLKAINPYYAIAFLVDEGLRGYFLLGGIFLVVTGGEALFADIGHFGKNPIRFSWFFIALPCLLLNYFGQGANLIVRPEEISNPFFMIAPPWFYLPLIIIATVATVIASQAVISATFSLTKQAVLLGLCPKIPIVQTSMLHSGQIYVPQINFILFIGTMAFCLAFKTSDNLAHAYGIAVNLEMLLVDAMVAYAAVSIWRWSTFNVIFLFGLFLLIDLAFLGANTHKFITGGWVPIVLAFFIAFIMYSWRYGLEYLRDNFYMNKEDISKILKQLQYKSLNQLPGVSAIFITDVYDKSGGSFLHFLKLNRSVPENVLIVNYIVDNIPYVHYSQRYEIVCLDEKVCKLVIHYGFMETINIPRSLEKACNKNILPFKFNVDTATFMVEIPNIMASKEKRSLSFYWQEKLFAFLMRNYSANLNIEFYKLPYNRTIAIGTYCIL</sequence>
<protein>
    <recommendedName>
        <fullName evidence="1">Probable potassium transport system protein Kup 1</fullName>
    </recommendedName>
</protein>
<keyword id="KW-0997">Cell inner membrane</keyword>
<keyword id="KW-1003">Cell membrane</keyword>
<keyword id="KW-0406">Ion transport</keyword>
<keyword id="KW-0472">Membrane</keyword>
<keyword id="KW-0630">Potassium</keyword>
<keyword id="KW-0633">Potassium transport</keyword>
<keyword id="KW-0769">Symport</keyword>
<keyword id="KW-0812">Transmembrane</keyword>
<keyword id="KW-1133">Transmembrane helix</keyword>
<keyword id="KW-0813">Transport</keyword>
<evidence type="ECO:0000255" key="1">
    <source>
        <dbReference type="HAMAP-Rule" id="MF_01522"/>
    </source>
</evidence>
<comment type="function">
    <text evidence="1">Transport of potassium into the cell. Likely operates as a K(+):H(+) symporter.</text>
</comment>
<comment type="catalytic activity">
    <reaction evidence="1">
        <text>K(+)(in) + H(+)(in) = K(+)(out) + H(+)(out)</text>
        <dbReference type="Rhea" id="RHEA:28490"/>
        <dbReference type="ChEBI" id="CHEBI:15378"/>
        <dbReference type="ChEBI" id="CHEBI:29103"/>
    </reaction>
    <physiologicalReaction direction="right-to-left" evidence="1">
        <dbReference type="Rhea" id="RHEA:28492"/>
    </physiologicalReaction>
</comment>
<comment type="subcellular location">
    <subcellularLocation>
        <location evidence="1">Cell inner membrane</location>
        <topology evidence="1">Multi-pass membrane protein</topology>
    </subcellularLocation>
</comment>
<comment type="similarity">
    <text evidence="1">Belongs to the HAK/KUP transporter (TC 2.A.72) family.</text>
</comment>
<feature type="chain" id="PRO_0000209029" description="Probable potassium transport system protein Kup 1">
    <location>
        <begin position="1"/>
        <end position="624"/>
    </location>
</feature>
<feature type="transmembrane region" description="Helical" evidence="1">
    <location>
        <begin position="10"/>
        <end position="30"/>
    </location>
</feature>
<feature type="transmembrane region" description="Helical" evidence="1">
    <location>
        <begin position="48"/>
        <end position="68"/>
    </location>
</feature>
<feature type="transmembrane region" description="Helical" evidence="1">
    <location>
        <begin position="94"/>
        <end position="114"/>
    </location>
</feature>
<feature type="transmembrane region" description="Helical" evidence="1">
    <location>
        <begin position="133"/>
        <end position="153"/>
    </location>
</feature>
<feature type="transmembrane region" description="Helical" evidence="1">
    <location>
        <begin position="159"/>
        <end position="179"/>
    </location>
</feature>
<feature type="transmembrane region" description="Helical" evidence="1">
    <location>
        <begin position="210"/>
        <end position="230"/>
    </location>
</feature>
<feature type="transmembrane region" description="Helical" evidence="1">
    <location>
        <begin position="242"/>
        <end position="262"/>
    </location>
</feature>
<feature type="transmembrane region" description="Helical" evidence="1">
    <location>
        <begin position="270"/>
        <end position="290"/>
    </location>
</feature>
<feature type="transmembrane region" description="Helical" evidence="1">
    <location>
        <begin position="331"/>
        <end position="351"/>
    </location>
</feature>
<feature type="transmembrane region" description="Helical" evidence="1">
    <location>
        <begin position="363"/>
        <end position="383"/>
    </location>
</feature>
<feature type="transmembrane region" description="Helical" evidence="1">
    <location>
        <begin position="388"/>
        <end position="408"/>
    </location>
</feature>
<feature type="transmembrane region" description="Helical" evidence="1">
    <location>
        <begin position="413"/>
        <end position="433"/>
    </location>
</feature>
<dbReference type="EMBL" id="CR628336">
    <property type="protein sequence ID" value="CAH12341.1"/>
    <property type="molecule type" value="Genomic_DNA"/>
</dbReference>
<dbReference type="RefSeq" id="WP_011213541.1">
    <property type="nucleotide sequence ID" value="NC_006368.1"/>
</dbReference>
<dbReference type="KEGG" id="lpp:lpp1190"/>
<dbReference type="LegioList" id="lpp1190"/>
<dbReference type="HOGENOM" id="CLU_008142_4_2_6"/>
<dbReference type="GO" id="GO:0005886">
    <property type="term" value="C:plasma membrane"/>
    <property type="evidence" value="ECO:0007669"/>
    <property type="project" value="UniProtKB-SubCell"/>
</dbReference>
<dbReference type="GO" id="GO:0015079">
    <property type="term" value="F:potassium ion transmembrane transporter activity"/>
    <property type="evidence" value="ECO:0007669"/>
    <property type="project" value="UniProtKB-UniRule"/>
</dbReference>
<dbReference type="GO" id="GO:0015293">
    <property type="term" value="F:symporter activity"/>
    <property type="evidence" value="ECO:0007669"/>
    <property type="project" value="UniProtKB-UniRule"/>
</dbReference>
<dbReference type="HAMAP" id="MF_01522">
    <property type="entry name" value="Kup"/>
    <property type="match status" value="1"/>
</dbReference>
<dbReference type="InterPro" id="IPR003855">
    <property type="entry name" value="K+_transporter"/>
</dbReference>
<dbReference type="InterPro" id="IPR053952">
    <property type="entry name" value="K_trans_C"/>
</dbReference>
<dbReference type="InterPro" id="IPR053951">
    <property type="entry name" value="K_trans_N"/>
</dbReference>
<dbReference type="InterPro" id="IPR023051">
    <property type="entry name" value="Kup"/>
</dbReference>
<dbReference type="PANTHER" id="PTHR30540:SF79">
    <property type="entry name" value="LOW AFFINITY POTASSIUM TRANSPORT SYSTEM PROTEIN KUP"/>
    <property type="match status" value="1"/>
</dbReference>
<dbReference type="PANTHER" id="PTHR30540">
    <property type="entry name" value="OSMOTIC STRESS POTASSIUM TRANSPORTER"/>
    <property type="match status" value="1"/>
</dbReference>
<dbReference type="Pfam" id="PF02705">
    <property type="entry name" value="K_trans"/>
    <property type="match status" value="1"/>
</dbReference>
<dbReference type="Pfam" id="PF22776">
    <property type="entry name" value="K_trans_C"/>
    <property type="match status" value="1"/>
</dbReference>
<name>KUP1_LEGPA</name>
<gene>
    <name evidence="1" type="primary">kup1</name>
    <name type="ordered locus">lpp1190</name>
</gene>
<organism>
    <name type="scientific">Legionella pneumophila (strain Paris)</name>
    <dbReference type="NCBI Taxonomy" id="297246"/>
    <lineage>
        <taxon>Bacteria</taxon>
        <taxon>Pseudomonadati</taxon>
        <taxon>Pseudomonadota</taxon>
        <taxon>Gammaproteobacteria</taxon>
        <taxon>Legionellales</taxon>
        <taxon>Legionellaceae</taxon>
        <taxon>Legionella</taxon>
    </lineage>
</organism>
<proteinExistence type="inferred from homology"/>